<keyword id="KW-0002">3D-structure</keyword>
<keyword id="KW-0007">Acetylation</keyword>
<keyword id="KW-0963">Cytoplasm</keyword>
<keyword id="KW-1017">Isopeptide bond</keyword>
<keyword id="KW-0944">Nitration</keyword>
<keyword id="KW-0597">Phosphoprotein</keyword>
<keyword id="KW-1185">Reference proteome</keyword>
<keyword id="KW-0832">Ubl conjugation</keyword>
<accession>Q3SZI4</accession>
<accession>A7E3X8</accession>
<proteinExistence type="evidence at protein level"/>
<dbReference type="EMBL" id="BT030749">
    <property type="protein sequence ID" value="ABS45065.1"/>
    <property type="molecule type" value="mRNA"/>
</dbReference>
<dbReference type="EMBL" id="BC102840">
    <property type="protein sequence ID" value="AAI02841.1"/>
    <property type="molecule type" value="mRNA"/>
</dbReference>
<dbReference type="RefSeq" id="NP_001071595.1">
    <property type="nucleotide sequence ID" value="NM_001078127.2"/>
</dbReference>
<dbReference type="PDB" id="6BCY">
    <property type="method" value="X-ray"/>
    <property type="resolution" value="2.30 A"/>
    <property type="chains" value="A/B/E/F=1-245"/>
</dbReference>
<dbReference type="PDB" id="6BD1">
    <property type="method" value="X-ray"/>
    <property type="resolution" value="2.35 A"/>
    <property type="chains" value="A/B/E/F=1-245"/>
</dbReference>
<dbReference type="PDBsum" id="6BCY"/>
<dbReference type="PDBsum" id="6BD1"/>
<dbReference type="SMR" id="Q3SZI4"/>
<dbReference type="FunCoup" id="Q3SZI4">
    <property type="interactions" value="2323"/>
</dbReference>
<dbReference type="STRING" id="9913.ENSBTAP00000073967"/>
<dbReference type="PaxDb" id="9913-ENSBTAP00000032779"/>
<dbReference type="PeptideAtlas" id="Q3SZI4"/>
<dbReference type="Ensembl" id="ENSBTAT00000032851.3">
    <property type="protein sequence ID" value="ENSBTAP00000032779.2"/>
    <property type="gene ID" value="ENSBTAG00000002108.5"/>
</dbReference>
<dbReference type="GeneID" id="768311"/>
<dbReference type="KEGG" id="bta:768311"/>
<dbReference type="CTD" id="10971"/>
<dbReference type="VEuPathDB" id="HostDB:ENSBTAG00000002108"/>
<dbReference type="VGNC" id="VGNC:37047">
    <property type="gene designation" value="YWHAQ"/>
</dbReference>
<dbReference type="eggNOG" id="KOG0841">
    <property type="taxonomic scope" value="Eukaryota"/>
</dbReference>
<dbReference type="GeneTree" id="ENSGT01090000260040"/>
<dbReference type="HOGENOM" id="CLU_058290_1_0_1"/>
<dbReference type="InParanoid" id="Q3SZI4"/>
<dbReference type="OMA" id="CFLMYYL"/>
<dbReference type="OrthoDB" id="10260625at2759"/>
<dbReference type="TreeFam" id="TF102002"/>
<dbReference type="Reactome" id="R-BTA-111447">
    <property type="pathway name" value="Activation of BAD and translocation to mitochondria"/>
</dbReference>
<dbReference type="Reactome" id="R-BTA-5625740">
    <property type="pathway name" value="RHO GTPases activate PKNs"/>
</dbReference>
<dbReference type="Reactome" id="R-BTA-5628897">
    <property type="pathway name" value="TP53 Regulates Metabolic Genes"/>
</dbReference>
<dbReference type="Reactome" id="R-BTA-75035">
    <property type="pathway name" value="Chk1/Chk2(Cds1) mediated inactivation of Cyclin B:Cdk1 complex"/>
</dbReference>
<dbReference type="Reactome" id="R-BTA-9614399">
    <property type="pathway name" value="Regulation of localization of FOXO transcription factors"/>
</dbReference>
<dbReference type="Proteomes" id="UP000009136">
    <property type="component" value="Chromosome 11"/>
</dbReference>
<dbReference type="Bgee" id="ENSBTAG00000002108">
    <property type="expression patterns" value="Expressed in adenohypophysis and 102 other cell types or tissues"/>
</dbReference>
<dbReference type="GO" id="GO:0005737">
    <property type="term" value="C:cytoplasm"/>
    <property type="evidence" value="ECO:0000318"/>
    <property type="project" value="GO_Central"/>
</dbReference>
<dbReference type="GO" id="GO:0008104">
    <property type="term" value="P:protein localization"/>
    <property type="evidence" value="ECO:0000318"/>
    <property type="project" value="GO_Central"/>
</dbReference>
<dbReference type="GO" id="GO:0007165">
    <property type="term" value="P:signal transduction"/>
    <property type="evidence" value="ECO:0000318"/>
    <property type="project" value="GO_Central"/>
</dbReference>
<dbReference type="CDD" id="cd10023">
    <property type="entry name" value="14-3-3_theta"/>
    <property type="match status" value="1"/>
</dbReference>
<dbReference type="FunFam" id="1.20.190.20:FF:000001">
    <property type="entry name" value="14-3-3 gamma 1"/>
    <property type="match status" value="1"/>
</dbReference>
<dbReference type="Gene3D" id="1.20.190.20">
    <property type="entry name" value="14-3-3 domain"/>
    <property type="match status" value="1"/>
</dbReference>
<dbReference type="InterPro" id="IPR000308">
    <property type="entry name" value="14-3-3"/>
</dbReference>
<dbReference type="InterPro" id="IPR023409">
    <property type="entry name" value="14-3-3_CS"/>
</dbReference>
<dbReference type="InterPro" id="IPR036815">
    <property type="entry name" value="14-3-3_dom_sf"/>
</dbReference>
<dbReference type="InterPro" id="IPR023410">
    <property type="entry name" value="14-3-3_domain"/>
</dbReference>
<dbReference type="InterPro" id="IPR042584">
    <property type="entry name" value="14-3-3_theta"/>
</dbReference>
<dbReference type="PANTHER" id="PTHR18860">
    <property type="entry name" value="14-3-3 PROTEIN"/>
    <property type="match status" value="1"/>
</dbReference>
<dbReference type="Pfam" id="PF00244">
    <property type="entry name" value="14-3-3"/>
    <property type="match status" value="1"/>
</dbReference>
<dbReference type="PIRSF" id="PIRSF000868">
    <property type="entry name" value="14-3-3"/>
    <property type="match status" value="1"/>
</dbReference>
<dbReference type="PRINTS" id="PR00305">
    <property type="entry name" value="1433ZETA"/>
</dbReference>
<dbReference type="SMART" id="SM00101">
    <property type="entry name" value="14_3_3"/>
    <property type="match status" value="1"/>
</dbReference>
<dbReference type="SUPFAM" id="SSF48445">
    <property type="entry name" value="14-3-3 protein"/>
    <property type="match status" value="1"/>
</dbReference>
<dbReference type="PROSITE" id="PS00796">
    <property type="entry name" value="1433_1"/>
    <property type="match status" value="1"/>
</dbReference>
<dbReference type="PROSITE" id="PS00797">
    <property type="entry name" value="1433_2"/>
    <property type="match status" value="1"/>
</dbReference>
<feature type="chain" id="PRO_0000058635" description="14-3-3 protein theta">
    <location>
        <begin position="1"/>
        <end position="245"/>
    </location>
</feature>
<feature type="site" description="Interaction with phosphoserine on interacting protein" evidence="1">
    <location>
        <position position="56"/>
    </location>
</feature>
<feature type="site" description="Interaction with phosphoserine on interacting protein" evidence="1">
    <location>
        <position position="127"/>
    </location>
</feature>
<feature type="modified residue" description="N-acetylmethionine" evidence="2">
    <location>
        <position position="1"/>
    </location>
</feature>
<feature type="modified residue" description="N6-acetyllysine" evidence="2">
    <location>
        <position position="3"/>
    </location>
</feature>
<feature type="modified residue" description="N6-acetyllysine; alternate" evidence="2">
    <location>
        <position position="49"/>
    </location>
</feature>
<feature type="modified residue" description="N6-acetyllysine" evidence="2">
    <location>
        <position position="68"/>
    </location>
</feature>
<feature type="modified residue" description="3'-nitrotyrosine" evidence="4">
    <location>
        <position position="82"/>
    </location>
</feature>
<feature type="modified residue" description="Phosphoserine" evidence="3">
    <location>
        <position position="92"/>
    </location>
</feature>
<feature type="modified residue" description="3'-nitrotyrosine" evidence="4">
    <location>
        <position position="104"/>
    </location>
</feature>
<feature type="modified residue" description="N6-acetyllysine" evidence="2">
    <location>
        <position position="115"/>
    </location>
</feature>
<feature type="modified residue" description="Phosphoserine; by CK1" evidence="2 5">
    <location>
        <position position="232"/>
    </location>
</feature>
<feature type="cross-link" description="Glycyl lysine isopeptide (Lys-Gly) (interchain with G-Cter in SUMO2); alternate" evidence="2">
    <location>
        <position position="49"/>
    </location>
</feature>
<feature type="helix" evidence="6">
    <location>
        <begin position="3"/>
        <end position="15"/>
    </location>
</feature>
<feature type="helix" evidence="6">
    <location>
        <begin position="19"/>
        <end position="31"/>
    </location>
</feature>
<feature type="helix" evidence="6">
    <location>
        <begin position="38"/>
        <end position="67"/>
    </location>
</feature>
<feature type="helix" evidence="6">
    <location>
        <begin position="76"/>
        <end position="103"/>
    </location>
</feature>
<feature type="turn" evidence="6">
    <location>
        <begin position="104"/>
        <end position="108"/>
    </location>
</feature>
<feature type="helix" evidence="6">
    <location>
        <begin position="112"/>
        <end position="132"/>
    </location>
</feature>
<feature type="helix" evidence="6">
    <location>
        <begin position="135"/>
        <end position="159"/>
    </location>
</feature>
<feature type="helix" evidence="6">
    <location>
        <begin position="165"/>
        <end position="180"/>
    </location>
</feature>
<feature type="helix" evidence="6">
    <location>
        <begin position="185"/>
        <end position="201"/>
    </location>
</feature>
<feature type="helix" evidence="6">
    <location>
        <begin position="202"/>
        <end position="205"/>
    </location>
</feature>
<feature type="helix" evidence="6">
    <location>
        <begin position="208"/>
        <end position="228"/>
    </location>
</feature>
<name>1433T_BOVIN</name>
<protein>
    <recommendedName>
        <fullName>14-3-3 protein theta</fullName>
    </recommendedName>
</protein>
<comment type="function">
    <text evidence="1">Adapter protein implicated in the regulation of a large spectrum of both general and specialized signaling pathways. Binds to a large number of partners, usually by recognition of a phosphoserine or phosphothreonine motif. Binding generally results in the modulation of the activity of the binding partner. Negatively regulates the kinase activity of PDPK1 (By similarity).</text>
</comment>
<comment type="subunit">
    <text evidence="2 3">Homodimer. Interacts with CDK16 (By similarity). Interacts with RGS7 (phosphorylated form). Interacts with SSH1. Interacts with CDKN1B ('Thr-198' phosphorylated form); the interaction translocates CDKN1B to the cytoplasm. Interacts with GAB2. Interacts with the 'Ser-241' phosphorylated form of PDPK1. Interacts with the 'Thr-369' phosphorylated form of DAPK2 (By similarity). Interacts with PI4KB, TBC1D22A and TBC1D22B (By similarity). Interacts with SLITRK1 (By similarity). Interacts with RIPOR2 (By similarity). Interacts with INAVA; the interaction increases upon PRR (pattern recognition receptor) stimulation and is required for cellular signaling pathway activation and cytokine secretion (By similarity). Interacts with MARK2, MARK3 and MARK4 (By similarity). Interacts with MEFV (By similarity).</text>
</comment>
<comment type="subcellular location">
    <subcellularLocation>
        <location evidence="1">Cytoplasm</location>
    </subcellularLocation>
</comment>
<comment type="similarity">
    <text evidence="5">Belongs to the 14-3-3 family.</text>
</comment>
<gene>
    <name type="primary">YWHAQ</name>
</gene>
<evidence type="ECO:0000250" key="1"/>
<evidence type="ECO:0000250" key="2">
    <source>
        <dbReference type="UniProtKB" id="P27348"/>
    </source>
</evidence>
<evidence type="ECO:0000250" key="3">
    <source>
        <dbReference type="UniProtKB" id="P68254"/>
    </source>
</evidence>
<evidence type="ECO:0000250" key="4">
    <source>
        <dbReference type="UniProtKB" id="Q9CQV8"/>
    </source>
</evidence>
<evidence type="ECO:0000305" key="5"/>
<evidence type="ECO:0007829" key="6">
    <source>
        <dbReference type="PDB" id="6BCY"/>
    </source>
</evidence>
<sequence length="245" mass="27764">MEKTELIQKAKLAEQAERYDDMATCMKAVTEQGAELSNEERNLLSVAYKNVVGGRRSAWRVISSIEQKTDTSDKKLQLIKDYREKVESELRSICTTVLELLDKYLIANATNPESKVFYLKMKGDYFRYLAEVACGDDRKQTIDNSQGAYQEAFDISKKEMQPTHPIRLGLALNFSVFYYEILNNPELACTLAKTAFDEAIAELDTLNEDSYKDSTLIMQLLRDNLTLWTSDSAGEECDAAEGAEN</sequence>
<reference key="1">
    <citation type="journal article" date="2005" name="BMC Genomics">
        <title>Characterization of 954 bovine full-CDS cDNA sequences.</title>
        <authorList>
            <person name="Harhay G.P."/>
            <person name="Sonstegard T.S."/>
            <person name="Keele J.W."/>
            <person name="Heaton M.P."/>
            <person name="Clawson M.L."/>
            <person name="Snelling W.M."/>
            <person name="Wiedmann R.T."/>
            <person name="Van Tassell C.P."/>
            <person name="Smith T.P.L."/>
        </authorList>
    </citation>
    <scope>NUCLEOTIDE SEQUENCE [LARGE SCALE MRNA]</scope>
</reference>
<reference key="2">
    <citation type="submission" date="2005-08" db="EMBL/GenBank/DDBJ databases">
        <authorList>
            <consortium name="NIH - Mammalian Gene Collection (MGC) project"/>
        </authorList>
    </citation>
    <scope>NUCLEOTIDE SEQUENCE [LARGE SCALE MRNA]</scope>
    <source>
        <strain>Crossbred X Angus</strain>
        <tissue>Ileum</tissue>
    </source>
</reference>
<organism>
    <name type="scientific">Bos taurus</name>
    <name type="common">Bovine</name>
    <dbReference type="NCBI Taxonomy" id="9913"/>
    <lineage>
        <taxon>Eukaryota</taxon>
        <taxon>Metazoa</taxon>
        <taxon>Chordata</taxon>
        <taxon>Craniata</taxon>
        <taxon>Vertebrata</taxon>
        <taxon>Euteleostomi</taxon>
        <taxon>Mammalia</taxon>
        <taxon>Eutheria</taxon>
        <taxon>Laurasiatheria</taxon>
        <taxon>Artiodactyla</taxon>
        <taxon>Ruminantia</taxon>
        <taxon>Pecora</taxon>
        <taxon>Bovidae</taxon>
        <taxon>Bovinae</taxon>
        <taxon>Bos</taxon>
    </lineage>
</organism>